<protein>
    <recommendedName>
        <fullName>Polyribonucleotide nucleotidyltransferase 1, mitochondrial</fullName>
        <ecNumber>2.7.7.8</ecNumber>
    </recommendedName>
    <alternativeName>
        <fullName>Polynucleotide phosphorylase 1</fullName>
        <shortName>PNPase 1</shortName>
    </alternativeName>
</protein>
<reference key="1">
    <citation type="submission" date="2004-11" db="EMBL/GenBank/DDBJ databases">
        <authorList>
            <consortium name="The German cDNA consortium"/>
        </authorList>
    </citation>
    <scope>NUCLEOTIDE SEQUENCE [LARGE SCALE MRNA]</scope>
    <source>
        <tissue>Kidney</tissue>
    </source>
</reference>
<dbReference type="EC" id="2.7.7.8"/>
<dbReference type="EMBL" id="CR858156">
    <property type="protein sequence ID" value="CAH90395.1"/>
    <property type="status" value="ALT_FRAME"/>
    <property type="molecule type" value="mRNA"/>
</dbReference>
<dbReference type="RefSeq" id="NP_001125193.1">
    <property type="nucleotide sequence ID" value="NM_001131721.1"/>
</dbReference>
<dbReference type="RefSeq" id="XP_009235565.2">
    <property type="nucleotide sequence ID" value="XM_009237290.4"/>
</dbReference>
<dbReference type="SMR" id="Q5RCW2"/>
<dbReference type="FunCoup" id="Q5RCW2">
    <property type="interactions" value="2779"/>
</dbReference>
<dbReference type="STRING" id="9601.ENSPPYP00000013832"/>
<dbReference type="GeneID" id="100172084"/>
<dbReference type="KEGG" id="pon:100172084"/>
<dbReference type="CTD" id="87178"/>
<dbReference type="eggNOG" id="KOG1067">
    <property type="taxonomic scope" value="Eukaryota"/>
</dbReference>
<dbReference type="InParanoid" id="Q5RCW2"/>
<dbReference type="OrthoDB" id="437922at2759"/>
<dbReference type="Proteomes" id="UP000001595">
    <property type="component" value="Unplaced"/>
</dbReference>
<dbReference type="GO" id="GO:0005829">
    <property type="term" value="C:cytosol"/>
    <property type="evidence" value="ECO:0007669"/>
    <property type="project" value="TreeGrafter"/>
</dbReference>
<dbReference type="GO" id="GO:0016020">
    <property type="term" value="C:membrane"/>
    <property type="evidence" value="ECO:0007669"/>
    <property type="project" value="UniProtKB-KW"/>
</dbReference>
<dbReference type="GO" id="GO:0045025">
    <property type="term" value="C:mitochondrial degradosome"/>
    <property type="evidence" value="ECO:0000250"/>
    <property type="project" value="UniProtKB"/>
</dbReference>
<dbReference type="GO" id="GO:0005758">
    <property type="term" value="C:mitochondrial intermembrane space"/>
    <property type="evidence" value="ECO:0007669"/>
    <property type="project" value="UniProtKB-SubCell"/>
</dbReference>
<dbReference type="GO" id="GO:0005759">
    <property type="term" value="C:mitochondrial matrix"/>
    <property type="evidence" value="ECO:0007669"/>
    <property type="project" value="UniProtKB-SubCell"/>
</dbReference>
<dbReference type="GO" id="GO:0005739">
    <property type="term" value="C:mitochondrion"/>
    <property type="evidence" value="ECO:0000250"/>
    <property type="project" value="UniProtKB"/>
</dbReference>
<dbReference type="GO" id="GO:0000175">
    <property type="term" value="F:3'-5'-RNA exonuclease activity"/>
    <property type="evidence" value="ECO:0000250"/>
    <property type="project" value="UniProtKB"/>
</dbReference>
<dbReference type="GO" id="GO:0035198">
    <property type="term" value="F:miRNA binding"/>
    <property type="evidence" value="ECO:0000250"/>
    <property type="project" value="UniProtKB"/>
</dbReference>
<dbReference type="GO" id="GO:0034046">
    <property type="term" value="F:poly(G) binding"/>
    <property type="evidence" value="ECO:0000250"/>
    <property type="project" value="UniProtKB"/>
</dbReference>
<dbReference type="GO" id="GO:0008266">
    <property type="term" value="F:poly(U) RNA binding"/>
    <property type="evidence" value="ECO:0000250"/>
    <property type="project" value="UniProtKB"/>
</dbReference>
<dbReference type="GO" id="GO:0004654">
    <property type="term" value="F:polyribonucleotide nucleotidyltransferase activity"/>
    <property type="evidence" value="ECO:0000250"/>
    <property type="project" value="UniProtKB"/>
</dbReference>
<dbReference type="GO" id="GO:0034599">
    <property type="term" value="P:cellular response to oxidative stress"/>
    <property type="evidence" value="ECO:0000250"/>
    <property type="project" value="UniProtKB"/>
</dbReference>
<dbReference type="GO" id="GO:0000958">
    <property type="term" value="P:mitochondrial mRNA catabolic process"/>
    <property type="evidence" value="ECO:0000250"/>
    <property type="project" value="UniProtKB"/>
</dbReference>
<dbReference type="GO" id="GO:0097222">
    <property type="term" value="P:mitochondrial mRNA polyadenylation"/>
    <property type="evidence" value="ECO:0000250"/>
    <property type="project" value="UniProtKB"/>
</dbReference>
<dbReference type="GO" id="GO:0000965">
    <property type="term" value="P:mitochondrial RNA 3'-end processing"/>
    <property type="evidence" value="ECO:0000250"/>
    <property type="project" value="UniProtKB"/>
</dbReference>
<dbReference type="GO" id="GO:0000964">
    <property type="term" value="P:mitochondrial RNA 5'-end processing"/>
    <property type="evidence" value="ECO:0000250"/>
    <property type="project" value="UniProtKB"/>
</dbReference>
<dbReference type="GO" id="GO:0000957">
    <property type="term" value="P:mitochondrial RNA catabolic process"/>
    <property type="evidence" value="ECO:0000250"/>
    <property type="project" value="UniProtKB"/>
</dbReference>
<dbReference type="GO" id="GO:0007005">
    <property type="term" value="P:mitochondrion organization"/>
    <property type="evidence" value="ECO:0000250"/>
    <property type="project" value="UniProtKB"/>
</dbReference>
<dbReference type="GO" id="GO:0006402">
    <property type="term" value="P:mRNA catabolic process"/>
    <property type="evidence" value="ECO:0000250"/>
    <property type="project" value="UniProtKB"/>
</dbReference>
<dbReference type="GO" id="GO:0006397">
    <property type="term" value="P:mRNA processing"/>
    <property type="evidence" value="ECO:0007669"/>
    <property type="project" value="UniProtKB-KW"/>
</dbReference>
<dbReference type="GO" id="GO:0071042">
    <property type="term" value="P:nuclear polyadenylation-dependent mRNA catabolic process"/>
    <property type="evidence" value="ECO:0000250"/>
    <property type="project" value="UniProtKB"/>
</dbReference>
<dbReference type="GO" id="GO:2000627">
    <property type="term" value="P:positive regulation of miRNA catabolic process"/>
    <property type="evidence" value="ECO:0000250"/>
    <property type="project" value="UniProtKB"/>
</dbReference>
<dbReference type="GO" id="GO:0000962">
    <property type="term" value="P:positive regulation of mitochondrial RNA catabolic process"/>
    <property type="evidence" value="ECO:0000250"/>
    <property type="project" value="UniProtKB"/>
</dbReference>
<dbReference type="GO" id="GO:0061014">
    <property type="term" value="P:positive regulation of mRNA catabolic process"/>
    <property type="evidence" value="ECO:0000250"/>
    <property type="project" value="UniProtKB"/>
</dbReference>
<dbReference type="GO" id="GO:0051260">
    <property type="term" value="P:protein homooligomerization"/>
    <property type="evidence" value="ECO:0000250"/>
    <property type="project" value="UniProtKB"/>
</dbReference>
<dbReference type="GO" id="GO:0070207">
    <property type="term" value="P:protein homotrimerization"/>
    <property type="evidence" value="ECO:0000250"/>
    <property type="project" value="UniProtKB"/>
</dbReference>
<dbReference type="GO" id="GO:0043457">
    <property type="term" value="P:regulation of cellular respiration"/>
    <property type="evidence" value="ECO:0000250"/>
    <property type="project" value="UniProtKB"/>
</dbReference>
<dbReference type="GO" id="GO:2000772">
    <property type="term" value="P:regulation of cellular senescence"/>
    <property type="evidence" value="ECO:0000250"/>
    <property type="project" value="UniProtKB"/>
</dbReference>
<dbReference type="GO" id="GO:0006401">
    <property type="term" value="P:RNA catabolic process"/>
    <property type="evidence" value="ECO:0000250"/>
    <property type="project" value="UniProtKB"/>
</dbReference>
<dbReference type="GO" id="GO:0035927">
    <property type="term" value="P:RNA import into mitochondrion"/>
    <property type="evidence" value="ECO:0000250"/>
    <property type="project" value="UniProtKB"/>
</dbReference>
<dbReference type="GO" id="GO:0035928">
    <property type="term" value="P:rRNA import into mitochondrion"/>
    <property type="evidence" value="ECO:0000250"/>
    <property type="project" value="UniProtKB"/>
</dbReference>
<dbReference type="CDD" id="cd09033">
    <property type="entry name" value="KH-I_PNPT1"/>
    <property type="match status" value="1"/>
</dbReference>
<dbReference type="CDD" id="cd11363">
    <property type="entry name" value="RNase_PH_PNPase_1"/>
    <property type="match status" value="1"/>
</dbReference>
<dbReference type="CDD" id="cd11364">
    <property type="entry name" value="RNase_PH_PNPase_2"/>
    <property type="match status" value="1"/>
</dbReference>
<dbReference type="CDD" id="cd00164">
    <property type="entry name" value="S1_like"/>
    <property type="match status" value="1"/>
</dbReference>
<dbReference type="FunFam" id="3.30.230.70:FF:000032">
    <property type="entry name" value="Polyribonucleotide nucleotidyltransferase 1"/>
    <property type="match status" value="1"/>
</dbReference>
<dbReference type="FunFam" id="1.10.10.400:FF:000001">
    <property type="entry name" value="Polyribonucleotide nucleotidyltransferase 1, mitochondrial"/>
    <property type="match status" value="1"/>
</dbReference>
<dbReference type="FunFam" id="3.30.1370.10:FF:000044">
    <property type="entry name" value="Polyribonucleotide nucleotidyltransferase 1, mitochondrial"/>
    <property type="match status" value="1"/>
</dbReference>
<dbReference type="FunFam" id="2.40.50.140:FF:000113">
    <property type="entry name" value="polyribonucleotide nucleotidyltransferase 1, mitochondrial"/>
    <property type="match status" value="1"/>
</dbReference>
<dbReference type="FunFam" id="3.30.230.70:FF:000008">
    <property type="entry name" value="polyribonucleotide nucleotidyltransferase 1, mitochondrial"/>
    <property type="match status" value="1"/>
</dbReference>
<dbReference type="Gene3D" id="3.30.230.70">
    <property type="entry name" value="GHMP Kinase, N-terminal domain"/>
    <property type="match status" value="2"/>
</dbReference>
<dbReference type="Gene3D" id="3.30.1370.10">
    <property type="entry name" value="K Homology domain, type 1"/>
    <property type="match status" value="1"/>
</dbReference>
<dbReference type="Gene3D" id="2.40.50.140">
    <property type="entry name" value="Nucleic acid-binding proteins"/>
    <property type="match status" value="1"/>
</dbReference>
<dbReference type="Gene3D" id="1.10.10.400">
    <property type="entry name" value="Polyribonucleotide nucleotidyltransferase, RNA-binding domain"/>
    <property type="match status" value="1"/>
</dbReference>
<dbReference type="InterPro" id="IPR001247">
    <property type="entry name" value="ExoRNase_PH_dom1"/>
</dbReference>
<dbReference type="InterPro" id="IPR015847">
    <property type="entry name" value="ExoRNase_PH_dom2"/>
</dbReference>
<dbReference type="InterPro" id="IPR036345">
    <property type="entry name" value="ExoRNase_PH_dom2_sf"/>
</dbReference>
<dbReference type="InterPro" id="IPR004087">
    <property type="entry name" value="KH_dom"/>
</dbReference>
<dbReference type="InterPro" id="IPR004088">
    <property type="entry name" value="KH_dom_type_1"/>
</dbReference>
<dbReference type="InterPro" id="IPR036612">
    <property type="entry name" value="KH_dom_type_1_sf"/>
</dbReference>
<dbReference type="InterPro" id="IPR012340">
    <property type="entry name" value="NA-bd_OB-fold"/>
</dbReference>
<dbReference type="InterPro" id="IPR012162">
    <property type="entry name" value="PNPase"/>
</dbReference>
<dbReference type="InterPro" id="IPR027408">
    <property type="entry name" value="PNPase/RNase_PH_dom_sf"/>
</dbReference>
<dbReference type="InterPro" id="IPR015848">
    <property type="entry name" value="PNPase_PH_RNA-bd_bac/org-type"/>
</dbReference>
<dbReference type="InterPro" id="IPR036456">
    <property type="entry name" value="PNPase_PH_RNA-bd_sf"/>
</dbReference>
<dbReference type="InterPro" id="IPR020568">
    <property type="entry name" value="Ribosomal_Su5_D2-typ_SF"/>
</dbReference>
<dbReference type="InterPro" id="IPR003029">
    <property type="entry name" value="S1_domain"/>
</dbReference>
<dbReference type="NCBIfam" id="TIGR03591">
    <property type="entry name" value="polynuc_phos"/>
    <property type="match status" value="1"/>
</dbReference>
<dbReference type="NCBIfam" id="NF008805">
    <property type="entry name" value="PRK11824.1"/>
    <property type="match status" value="1"/>
</dbReference>
<dbReference type="PANTHER" id="PTHR11252">
    <property type="entry name" value="POLYRIBONUCLEOTIDE NUCLEOTIDYLTRANSFERASE"/>
    <property type="match status" value="1"/>
</dbReference>
<dbReference type="PANTHER" id="PTHR11252:SF9">
    <property type="entry name" value="POLYRIBONUCLEOTIDE NUCLEOTIDYLTRANSFERASE 1, MITOCHONDRIAL"/>
    <property type="match status" value="1"/>
</dbReference>
<dbReference type="Pfam" id="PF00013">
    <property type="entry name" value="KH_1"/>
    <property type="match status" value="1"/>
</dbReference>
<dbReference type="Pfam" id="PF03726">
    <property type="entry name" value="PNPase"/>
    <property type="match status" value="1"/>
</dbReference>
<dbReference type="Pfam" id="PF01138">
    <property type="entry name" value="RNase_PH"/>
    <property type="match status" value="2"/>
</dbReference>
<dbReference type="Pfam" id="PF03725">
    <property type="entry name" value="RNase_PH_C"/>
    <property type="match status" value="1"/>
</dbReference>
<dbReference type="Pfam" id="PF00575">
    <property type="entry name" value="S1"/>
    <property type="match status" value="1"/>
</dbReference>
<dbReference type="PIRSF" id="PIRSF005499">
    <property type="entry name" value="PNPase"/>
    <property type="match status" value="1"/>
</dbReference>
<dbReference type="SMART" id="SM00322">
    <property type="entry name" value="KH"/>
    <property type="match status" value="1"/>
</dbReference>
<dbReference type="SMART" id="SM00316">
    <property type="entry name" value="S1"/>
    <property type="match status" value="1"/>
</dbReference>
<dbReference type="SUPFAM" id="SSF54791">
    <property type="entry name" value="Eukaryotic type KH-domain (KH-domain type I)"/>
    <property type="match status" value="1"/>
</dbReference>
<dbReference type="SUPFAM" id="SSF50249">
    <property type="entry name" value="Nucleic acid-binding proteins"/>
    <property type="match status" value="1"/>
</dbReference>
<dbReference type="SUPFAM" id="SSF46915">
    <property type="entry name" value="Polynucleotide phosphorylase/guanosine pentaphosphate synthase (PNPase/GPSI), domain 3"/>
    <property type="match status" value="1"/>
</dbReference>
<dbReference type="SUPFAM" id="SSF55666">
    <property type="entry name" value="Ribonuclease PH domain 2-like"/>
    <property type="match status" value="2"/>
</dbReference>
<dbReference type="SUPFAM" id="SSF54211">
    <property type="entry name" value="Ribosomal protein S5 domain 2-like"/>
    <property type="match status" value="2"/>
</dbReference>
<dbReference type="PROSITE" id="PS50084">
    <property type="entry name" value="KH_TYPE_1"/>
    <property type="match status" value="1"/>
</dbReference>
<dbReference type="PROSITE" id="PS50126">
    <property type="entry name" value="S1"/>
    <property type="match status" value="1"/>
</dbReference>
<name>PNPT1_PONAB</name>
<accession>Q5RCW2</accession>
<organism>
    <name type="scientific">Pongo abelii</name>
    <name type="common">Sumatran orangutan</name>
    <name type="synonym">Pongo pygmaeus abelii</name>
    <dbReference type="NCBI Taxonomy" id="9601"/>
    <lineage>
        <taxon>Eukaryota</taxon>
        <taxon>Metazoa</taxon>
        <taxon>Chordata</taxon>
        <taxon>Craniata</taxon>
        <taxon>Vertebrata</taxon>
        <taxon>Euteleostomi</taxon>
        <taxon>Mammalia</taxon>
        <taxon>Eutheria</taxon>
        <taxon>Euarchontoglires</taxon>
        <taxon>Primates</taxon>
        <taxon>Haplorrhini</taxon>
        <taxon>Catarrhini</taxon>
        <taxon>Hominidae</taxon>
        <taxon>Pongo</taxon>
    </lineage>
</organism>
<feature type="transit peptide" description="Mitochondrion" evidence="4">
    <location>
        <begin position="1"/>
        <end position="46"/>
    </location>
</feature>
<feature type="chain" id="PRO_0000024753" description="Polyribonucleotide nucleotidyltransferase 1, mitochondrial">
    <location>
        <begin position="47"/>
        <end position="783"/>
    </location>
</feature>
<feature type="domain" description="KH" evidence="5">
    <location>
        <begin position="605"/>
        <end position="664"/>
    </location>
</feature>
<feature type="domain" description="S1 motif" evidence="6">
    <location>
        <begin position="679"/>
        <end position="750"/>
    </location>
</feature>
<feature type="modified residue" description="N6-acetyllysine" evidence="2">
    <location>
        <position position="250"/>
    </location>
</feature>
<feature type="modified residue" description="N6-acetyllysine" evidence="3">
    <location>
        <position position="264"/>
    </location>
</feature>
<feature type="modified residue" description="N6-acetyllysine" evidence="3">
    <location>
        <position position="285"/>
    </location>
</feature>
<feature type="modified residue" description="N6-acetyllysine" evidence="3">
    <location>
        <position position="289"/>
    </location>
</feature>
<feature type="modified residue" description="N6-succinyllysine" evidence="2">
    <location>
        <position position="552"/>
    </location>
</feature>
<feature type="modified residue" description="Phosphoserine" evidence="3">
    <location>
        <position position="754"/>
    </location>
</feature>
<feature type="modified residue" description="Phosphoserine" evidence="3">
    <location>
        <position position="782"/>
    </location>
</feature>
<gene>
    <name type="primary">PNPT1</name>
    <name type="synonym">PNPASE</name>
</gene>
<proteinExistence type="evidence at transcript level"/>
<comment type="function">
    <text evidence="1 3">RNA-binding protein implicated in numerous RNA metabolic processes. Catalyzes the phosphorolysis of single-stranded polyribonucleotides processively in the 3'-to-5' direction. Mitochondrial intermembrane factor with RNA-processing exoribonulease activity. Component of the mitochondrial degradosome (mtEXO) complex, that degrades 3' overhang double-stranded RNA with a 3'-to-5' directionality in an ATP-dependent manner. Involved in the degradation of non-coding mitochondrial transcripts (MT-ncRNA) and tRNA-like molecules (By similarity). Required for correct processing and polyadenylation of mitochondrial mRNAs. Plays a role as a cytoplasmic RNA import factor that mediates the translocation of small RNA components like the 5S RNA, the RNA subunit of ribonuclease P and the mitochondrial RNA-processing (MRP) RNA, into the mitochondrial matrix. Plays a role in mitochondrial morphogenesis and respiration; regulates the expression of the electron transport chain (ETC) components at the mRNA and protein levels. In the cytoplasm, shows a 3'-to-5' exoribonuclease mediating mRNA degradation activity; degrades c-myc mRNA upon treatment with IFNB1/IFN-beta, resulting in a growth arrest in melanoma cells. Regulates the stability of specific mature miRNAs in melanoma cells; specifically and selectively degrades miR-221, preferentially. Also plays a role in RNA cell surveillance by cleaning up oxidized RNAs. Binds to the RNA subunit of ribonuclease P, MRP RNA and miR-221 microRNA (By similarity).</text>
</comment>
<comment type="catalytic activity">
    <reaction>
        <text>RNA(n+1) + phosphate = RNA(n) + a ribonucleoside 5'-diphosphate</text>
        <dbReference type="Rhea" id="RHEA:22096"/>
        <dbReference type="Rhea" id="RHEA-COMP:14527"/>
        <dbReference type="Rhea" id="RHEA-COMP:17342"/>
        <dbReference type="ChEBI" id="CHEBI:43474"/>
        <dbReference type="ChEBI" id="CHEBI:57930"/>
        <dbReference type="ChEBI" id="CHEBI:140395"/>
        <dbReference type="EC" id="2.7.7.8"/>
    </reaction>
</comment>
<comment type="subunit">
    <text evidence="3">Homotrimer; in free form. Homooligomer. Component of the mitochondrial degradosome (mtEXO) complex which is a heteropentamer containing 2 copies of SUPV3L1 and 3 copies of PNPT1. As part of the mitochondrial degradosome complex, interacts with GRSF1 in an RNA-dependent manner; the interaction enhances the activity of the complex. Interacts with TCL1A; the interaction has no effect on PNPT1 exonuclease activity.</text>
</comment>
<comment type="subcellular location">
    <subcellularLocation>
        <location evidence="3">Cytoplasm</location>
    </subcellularLocation>
    <subcellularLocation>
        <location evidence="3">Mitochondrion matrix</location>
    </subcellularLocation>
    <subcellularLocation>
        <location evidence="3">Mitochondrion intermembrane space</location>
        <topology evidence="3">Peripheral membrane protein</topology>
    </subcellularLocation>
</comment>
<comment type="similarity">
    <text evidence="7">Belongs to the polyribonucleotide nucleotidyltransferase family.</text>
</comment>
<comment type="sequence caution" evidence="7">
    <conflict type="frameshift">
        <sequence resource="EMBL-CDS" id="CAH90395"/>
    </conflict>
</comment>
<sequence>MAACRYCCSCLRLRPLSDGPFCLPGRDRALTQLLVRALWSSTGSRAVAVDLGNRKLEISSGKLARFADGSAVVQSGDTAVMVTAVSKTKPSPSQFMPLVVDYRQKAAAAGRIPTNYLRREIGTSDKEILTSRIIDRSIRPLFPAGYFYDTQVLCNLLAVDGVNEPDVLAINGASVALSLSDIPWNGPVGAVRIGIIDGECVVNPTRKEMSSSTLNLVVAGAPKSQIVMLEASAENILQQDFCHAIKVGVKYTQQIIQGIQQLVKETGVTKRTPQKLFTPSPEIVKHTHKLAMERLYAVFTDYEHDKVSRDEAVNKIRLDTEEQLKEKFPQADPYEIIESFNVVAKEVFRNIILNEYKRCDGRDLTSLRNVSCEVDMFKTLHGSALFQRGQTQVLCTVTFDSLESGIKSDQVITAINGIKDKNFMLHYEFPPYATNEIGKVTGLNRRELGHGALAEKALYPVIPRDFPFTIRVTSEVLESNGSSSMASACGGSLALMDSGVPISSAVAGVAIGLVTKTDPEKGEIEDYRLLTDILGIEDYNGDMDFKIAGTNKGITALQADIKLPGIPIKIVMEAIQQASVAKKEILQIMNKTISKPRTSRKENGPVVETVQVPLSKRAKFVGPGGYNLKKLQAETGVTISQVDEETFSVFAPTPSALHEARDFITEICKDDQEQQLEFGAVYTATITEIRDTGVMVKLYPNMTAVLLHNTQLDQRKIRHPTALGLEVGQEIQVKYFGRDPADGRMRLSRKVLQSPATTVVRTLNDRSSIVMGEPISQSSSNSQ</sequence>
<keyword id="KW-0007">Acetylation</keyword>
<keyword id="KW-0963">Cytoplasm</keyword>
<keyword id="KW-0269">Exonuclease</keyword>
<keyword id="KW-0378">Hydrolase</keyword>
<keyword id="KW-0472">Membrane</keyword>
<keyword id="KW-0496">Mitochondrion</keyword>
<keyword id="KW-0507">mRNA processing</keyword>
<keyword id="KW-0540">Nuclease</keyword>
<keyword id="KW-0548">Nucleotidyltransferase</keyword>
<keyword id="KW-0597">Phosphoprotein</keyword>
<keyword id="KW-1185">Reference proteome</keyword>
<keyword id="KW-0694">RNA-binding</keyword>
<keyword id="KW-0808">Transferase</keyword>
<keyword id="KW-0809">Transit peptide</keyword>
<keyword id="KW-0813">Transport</keyword>
<evidence type="ECO:0000250" key="1"/>
<evidence type="ECO:0000250" key="2">
    <source>
        <dbReference type="UniProtKB" id="Q8K1R3"/>
    </source>
</evidence>
<evidence type="ECO:0000250" key="3">
    <source>
        <dbReference type="UniProtKB" id="Q8TCS8"/>
    </source>
</evidence>
<evidence type="ECO:0000255" key="4"/>
<evidence type="ECO:0000255" key="5">
    <source>
        <dbReference type="PROSITE-ProRule" id="PRU00117"/>
    </source>
</evidence>
<evidence type="ECO:0000255" key="6">
    <source>
        <dbReference type="PROSITE-ProRule" id="PRU00180"/>
    </source>
</evidence>
<evidence type="ECO:0000305" key="7"/>